<reference key="1">
    <citation type="journal article" date="2002" name="Nat. Biotechnol.">
        <title>Genome sequence of the dissimilatory metal ion-reducing bacterium Shewanella oneidensis.</title>
        <authorList>
            <person name="Heidelberg J.F."/>
            <person name="Paulsen I.T."/>
            <person name="Nelson K.E."/>
            <person name="Gaidos E.J."/>
            <person name="Nelson W.C."/>
            <person name="Read T.D."/>
            <person name="Eisen J.A."/>
            <person name="Seshadri R."/>
            <person name="Ward N.L."/>
            <person name="Methe B.A."/>
            <person name="Clayton R.A."/>
            <person name="Meyer T."/>
            <person name="Tsapin A."/>
            <person name="Scott J."/>
            <person name="Beanan M.J."/>
            <person name="Brinkac L.M."/>
            <person name="Daugherty S.C."/>
            <person name="DeBoy R.T."/>
            <person name="Dodson R.J."/>
            <person name="Durkin A.S."/>
            <person name="Haft D.H."/>
            <person name="Kolonay J.F."/>
            <person name="Madupu R."/>
            <person name="Peterson J.D."/>
            <person name="Umayam L.A."/>
            <person name="White O."/>
            <person name="Wolf A.M."/>
            <person name="Vamathevan J.J."/>
            <person name="Weidman J.F."/>
            <person name="Impraim M."/>
            <person name="Lee K."/>
            <person name="Berry K.J."/>
            <person name="Lee C."/>
            <person name="Mueller J."/>
            <person name="Khouri H.M."/>
            <person name="Gill J."/>
            <person name="Utterback T.R."/>
            <person name="McDonald L.A."/>
            <person name="Feldblyum T.V."/>
            <person name="Smith H.O."/>
            <person name="Venter J.C."/>
            <person name="Nealson K.H."/>
            <person name="Fraser C.M."/>
        </authorList>
    </citation>
    <scope>NUCLEOTIDE SEQUENCE [LARGE SCALE GENOMIC DNA]</scope>
    <source>
        <strain>ATCC 700550 / JCM 31522 / CIP 106686 / LMG 19005 / NCIMB 14063 / MR-1</strain>
    </source>
</reference>
<proteinExistence type="inferred from homology"/>
<gene>
    <name evidence="1" type="primary">trhO</name>
    <name type="ordered locus">SO_2290</name>
</gene>
<dbReference type="EC" id="1.14.-.-" evidence="1"/>
<dbReference type="EMBL" id="AE014299">
    <property type="protein sequence ID" value="AAN55330.1"/>
    <property type="molecule type" value="Genomic_DNA"/>
</dbReference>
<dbReference type="RefSeq" id="NP_717886.1">
    <property type="nucleotide sequence ID" value="NC_004347.2"/>
</dbReference>
<dbReference type="RefSeq" id="WP_011072295.1">
    <property type="nucleotide sequence ID" value="NC_004347.2"/>
</dbReference>
<dbReference type="SMR" id="Q8EES8"/>
<dbReference type="STRING" id="211586.SO_2290"/>
<dbReference type="PaxDb" id="211586-SO_2290"/>
<dbReference type="KEGG" id="son:SO_2290"/>
<dbReference type="PATRIC" id="fig|1028802.3.peg.1918"/>
<dbReference type="eggNOG" id="COG1054">
    <property type="taxonomic scope" value="Bacteria"/>
</dbReference>
<dbReference type="HOGENOM" id="CLU_038878_0_0_6"/>
<dbReference type="OrthoDB" id="9778326at2"/>
<dbReference type="PhylomeDB" id="Q8EES8"/>
<dbReference type="BioCyc" id="SONE211586:G1GMP-2092-MONOMER"/>
<dbReference type="Proteomes" id="UP000008186">
    <property type="component" value="Chromosome"/>
</dbReference>
<dbReference type="GO" id="GO:0016705">
    <property type="term" value="F:oxidoreductase activity, acting on paired donors, with incorporation or reduction of molecular oxygen"/>
    <property type="evidence" value="ECO:0007669"/>
    <property type="project" value="UniProtKB-UniRule"/>
</dbReference>
<dbReference type="GO" id="GO:0006400">
    <property type="term" value="P:tRNA modification"/>
    <property type="evidence" value="ECO:0007669"/>
    <property type="project" value="UniProtKB-UniRule"/>
</dbReference>
<dbReference type="CDD" id="cd01518">
    <property type="entry name" value="RHOD_YceA"/>
    <property type="match status" value="1"/>
</dbReference>
<dbReference type="Gene3D" id="3.30.70.100">
    <property type="match status" value="1"/>
</dbReference>
<dbReference type="Gene3D" id="3.40.250.10">
    <property type="entry name" value="Rhodanese-like domain"/>
    <property type="match status" value="1"/>
</dbReference>
<dbReference type="HAMAP" id="MF_00469">
    <property type="entry name" value="TrhO"/>
    <property type="match status" value="1"/>
</dbReference>
<dbReference type="InterPro" id="IPR001763">
    <property type="entry name" value="Rhodanese-like_dom"/>
</dbReference>
<dbReference type="InterPro" id="IPR036873">
    <property type="entry name" value="Rhodanese-like_dom_sf"/>
</dbReference>
<dbReference type="InterPro" id="IPR020936">
    <property type="entry name" value="TrhO"/>
</dbReference>
<dbReference type="InterPro" id="IPR040503">
    <property type="entry name" value="TRHO_N"/>
</dbReference>
<dbReference type="NCBIfam" id="NF001136">
    <property type="entry name" value="PRK00142.1-4"/>
    <property type="match status" value="1"/>
</dbReference>
<dbReference type="PANTHER" id="PTHR43268:SF3">
    <property type="entry name" value="RHODANESE-LIKE DOMAIN-CONTAINING PROTEIN 7-RELATED"/>
    <property type="match status" value="1"/>
</dbReference>
<dbReference type="PANTHER" id="PTHR43268">
    <property type="entry name" value="THIOSULFATE SULFURTRANSFERASE/RHODANESE-LIKE DOMAIN-CONTAINING PROTEIN 2"/>
    <property type="match status" value="1"/>
</dbReference>
<dbReference type="Pfam" id="PF00581">
    <property type="entry name" value="Rhodanese"/>
    <property type="match status" value="1"/>
</dbReference>
<dbReference type="Pfam" id="PF17773">
    <property type="entry name" value="UPF0176_N"/>
    <property type="match status" value="1"/>
</dbReference>
<dbReference type="SMART" id="SM00450">
    <property type="entry name" value="RHOD"/>
    <property type="match status" value="1"/>
</dbReference>
<dbReference type="SUPFAM" id="SSF52821">
    <property type="entry name" value="Rhodanese/Cell cycle control phosphatase"/>
    <property type="match status" value="1"/>
</dbReference>
<dbReference type="PROSITE" id="PS50206">
    <property type="entry name" value="RHODANESE_3"/>
    <property type="match status" value="1"/>
</dbReference>
<accession>Q8EES8</accession>
<sequence>MSNVVVCALYKFVSLPHFESLREPLLSMMEQAEIKGTLLLASEGINGTVAGNQAAIDALLIWLNQQNGLENITYKLSFDDEMPFYRTKVKLKKEIVTMGVEGIDPLKVVGTYVKPKDWNALISDPEVVLVDTRNDYEVQIGTFKNAINPVTETFREFPEYVKQNLDPAKHKKVAMFCTGGIRCEKSTAYLKEQGFEEVYHLEGGILKYLEEVNKAESLWEGECFVFDNRVAVDHDLKKGQYDQCNACRMPITEAEKLTPDYVQGVSCPHCIDKISEEQRKRFVERERQVNLAKSRNEAHIGSDVNHVIEARRQKKEALRKQSAEKNKAKQANA</sequence>
<comment type="function">
    <text evidence="1">Catalyzes oxygen-dependent 5-hydroxyuridine (ho5U) modification at position 34 in tRNAs.</text>
</comment>
<comment type="catalytic activity">
    <reaction evidence="1">
        <text>uridine(34) in tRNA + AH2 + O2 = 5-hydroxyuridine(34) in tRNA + A + H2O</text>
        <dbReference type="Rhea" id="RHEA:64224"/>
        <dbReference type="Rhea" id="RHEA-COMP:11727"/>
        <dbReference type="Rhea" id="RHEA-COMP:13381"/>
        <dbReference type="ChEBI" id="CHEBI:13193"/>
        <dbReference type="ChEBI" id="CHEBI:15377"/>
        <dbReference type="ChEBI" id="CHEBI:15379"/>
        <dbReference type="ChEBI" id="CHEBI:17499"/>
        <dbReference type="ChEBI" id="CHEBI:65315"/>
        <dbReference type="ChEBI" id="CHEBI:136877"/>
    </reaction>
</comment>
<comment type="similarity">
    <text evidence="1">Belongs to the TrhO family.</text>
</comment>
<name>TRHO_SHEON</name>
<evidence type="ECO:0000255" key="1">
    <source>
        <dbReference type="HAMAP-Rule" id="MF_00469"/>
    </source>
</evidence>
<evidence type="ECO:0000256" key="2">
    <source>
        <dbReference type="SAM" id="MobiDB-lite"/>
    </source>
</evidence>
<keyword id="KW-0560">Oxidoreductase</keyword>
<keyword id="KW-1185">Reference proteome</keyword>
<keyword id="KW-0819">tRNA processing</keyword>
<organism>
    <name type="scientific">Shewanella oneidensis (strain ATCC 700550 / JCM 31522 / CIP 106686 / LMG 19005 / NCIMB 14063 / MR-1)</name>
    <dbReference type="NCBI Taxonomy" id="211586"/>
    <lineage>
        <taxon>Bacteria</taxon>
        <taxon>Pseudomonadati</taxon>
        <taxon>Pseudomonadota</taxon>
        <taxon>Gammaproteobacteria</taxon>
        <taxon>Alteromonadales</taxon>
        <taxon>Shewanellaceae</taxon>
        <taxon>Shewanella</taxon>
    </lineage>
</organism>
<protein>
    <recommendedName>
        <fullName evidence="1">tRNA uridine(34) hydroxylase</fullName>
        <ecNumber evidence="1">1.14.-.-</ecNumber>
    </recommendedName>
    <alternativeName>
        <fullName evidence="1">tRNA hydroxylation protein O</fullName>
    </alternativeName>
</protein>
<feature type="chain" id="PRO_0000161511" description="tRNA uridine(34) hydroxylase">
    <location>
        <begin position="1"/>
        <end position="333"/>
    </location>
</feature>
<feature type="domain" description="Rhodanese" evidence="1">
    <location>
        <begin position="123"/>
        <end position="217"/>
    </location>
</feature>
<feature type="region of interest" description="Disordered" evidence="2">
    <location>
        <begin position="313"/>
        <end position="333"/>
    </location>
</feature>
<feature type="compositionally biased region" description="Basic and acidic residues" evidence="2">
    <location>
        <begin position="313"/>
        <end position="327"/>
    </location>
</feature>
<feature type="active site" description="Cysteine persulfide intermediate" evidence="1">
    <location>
        <position position="177"/>
    </location>
</feature>